<keyword id="KW-1185">Reference proteome</keyword>
<keyword id="KW-0687">Ribonucleoprotein</keyword>
<keyword id="KW-0689">Ribosomal protein</keyword>
<protein>
    <recommendedName>
        <fullName evidence="1">Large ribosomal subunit protein uL13</fullName>
    </recommendedName>
    <alternativeName>
        <fullName evidence="2">50S ribosomal protein L13</fullName>
    </alternativeName>
</protein>
<reference key="1">
    <citation type="journal article" date="2008" name="PLoS Genet.">
        <title>Complete genome sequence of the complex carbohydrate-degrading marine bacterium, Saccharophagus degradans strain 2-40 T.</title>
        <authorList>
            <person name="Weiner R.M."/>
            <person name="Taylor L.E. II"/>
            <person name="Henrissat B."/>
            <person name="Hauser L."/>
            <person name="Land M."/>
            <person name="Coutinho P.M."/>
            <person name="Rancurel C."/>
            <person name="Saunders E.H."/>
            <person name="Longmire A.G."/>
            <person name="Zhang H."/>
            <person name="Bayer E.A."/>
            <person name="Gilbert H.J."/>
            <person name="Larimer F."/>
            <person name="Zhulin I.B."/>
            <person name="Ekborg N.A."/>
            <person name="Lamed R."/>
            <person name="Richardson P.M."/>
            <person name="Borovok I."/>
            <person name="Hutcheson S."/>
        </authorList>
    </citation>
    <scope>NUCLEOTIDE SEQUENCE [LARGE SCALE GENOMIC DNA]</scope>
    <source>
        <strain>2-40 / ATCC 43961 / DSM 17024</strain>
    </source>
</reference>
<name>RL13_SACD2</name>
<gene>
    <name evidence="1" type="primary">rplM</name>
    <name type="ordered locus">Sde_3164</name>
</gene>
<sequence>MKTISAKPETVKRDWYIIDADGKTLGRMAAEIAHRLRGKHKPEFTPHVDTGDYIVVINAEKVRVTGRKATDKMYYSHTGFIGGIKSISFEKLIDKAPERTIQNAVKGMLPRGPLGRAMFKKLKVYGGSEHPHTAQQPQELNI</sequence>
<evidence type="ECO:0000255" key="1">
    <source>
        <dbReference type="HAMAP-Rule" id="MF_01366"/>
    </source>
</evidence>
<evidence type="ECO:0000305" key="2"/>
<feature type="chain" id="PRO_0000261789" description="Large ribosomal subunit protein uL13">
    <location>
        <begin position="1"/>
        <end position="142"/>
    </location>
</feature>
<proteinExistence type="inferred from homology"/>
<dbReference type="EMBL" id="CP000282">
    <property type="protein sequence ID" value="ABD82421.1"/>
    <property type="molecule type" value="Genomic_DNA"/>
</dbReference>
<dbReference type="RefSeq" id="WP_011469637.1">
    <property type="nucleotide sequence ID" value="NC_007912.1"/>
</dbReference>
<dbReference type="SMR" id="Q21FV8"/>
<dbReference type="STRING" id="203122.Sde_3164"/>
<dbReference type="GeneID" id="98614791"/>
<dbReference type="KEGG" id="sde:Sde_3164"/>
<dbReference type="eggNOG" id="COG0102">
    <property type="taxonomic scope" value="Bacteria"/>
</dbReference>
<dbReference type="HOGENOM" id="CLU_082184_2_2_6"/>
<dbReference type="OrthoDB" id="9801330at2"/>
<dbReference type="Proteomes" id="UP000001947">
    <property type="component" value="Chromosome"/>
</dbReference>
<dbReference type="GO" id="GO:0022625">
    <property type="term" value="C:cytosolic large ribosomal subunit"/>
    <property type="evidence" value="ECO:0007669"/>
    <property type="project" value="TreeGrafter"/>
</dbReference>
<dbReference type="GO" id="GO:0003729">
    <property type="term" value="F:mRNA binding"/>
    <property type="evidence" value="ECO:0007669"/>
    <property type="project" value="TreeGrafter"/>
</dbReference>
<dbReference type="GO" id="GO:0003735">
    <property type="term" value="F:structural constituent of ribosome"/>
    <property type="evidence" value="ECO:0007669"/>
    <property type="project" value="InterPro"/>
</dbReference>
<dbReference type="GO" id="GO:0017148">
    <property type="term" value="P:negative regulation of translation"/>
    <property type="evidence" value="ECO:0007669"/>
    <property type="project" value="TreeGrafter"/>
</dbReference>
<dbReference type="GO" id="GO:0006412">
    <property type="term" value="P:translation"/>
    <property type="evidence" value="ECO:0007669"/>
    <property type="project" value="UniProtKB-UniRule"/>
</dbReference>
<dbReference type="CDD" id="cd00392">
    <property type="entry name" value="Ribosomal_L13"/>
    <property type="match status" value="1"/>
</dbReference>
<dbReference type="FunFam" id="3.90.1180.10:FF:000001">
    <property type="entry name" value="50S ribosomal protein L13"/>
    <property type="match status" value="1"/>
</dbReference>
<dbReference type="Gene3D" id="3.90.1180.10">
    <property type="entry name" value="Ribosomal protein L13"/>
    <property type="match status" value="1"/>
</dbReference>
<dbReference type="HAMAP" id="MF_01366">
    <property type="entry name" value="Ribosomal_uL13"/>
    <property type="match status" value="1"/>
</dbReference>
<dbReference type="InterPro" id="IPR005822">
    <property type="entry name" value="Ribosomal_uL13"/>
</dbReference>
<dbReference type="InterPro" id="IPR005823">
    <property type="entry name" value="Ribosomal_uL13_bac-type"/>
</dbReference>
<dbReference type="InterPro" id="IPR023563">
    <property type="entry name" value="Ribosomal_uL13_CS"/>
</dbReference>
<dbReference type="InterPro" id="IPR036899">
    <property type="entry name" value="Ribosomal_uL13_sf"/>
</dbReference>
<dbReference type="NCBIfam" id="TIGR01066">
    <property type="entry name" value="rplM_bact"/>
    <property type="match status" value="1"/>
</dbReference>
<dbReference type="PANTHER" id="PTHR11545:SF2">
    <property type="entry name" value="LARGE RIBOSOMAL SUBUNIT PROTEIN UL13M"/>
    <property type="match status" value="1"/>
</dbReference>
<dbReference type="PANTHER" id="PTHR11545">
    <property type="entry name" value="RIBOSOMAL PROTEIN L13"/>
    <property type="match status" value="1"/>
</dbReference>
<dbReference type="Pfam" id="PF00572">
    <property type="entry name" value="Ribosomal_L13"/>
    <property type="match status" value="1"/>
</dbReference>
<dbReference type="PIRSF" id="PIRSF002181">
    <property type="entry name" value="Ribosomal_L13"/>
    <property type="match status" value="1"/>
</dbReference>
<dbReference type="SUPFAM" id="SSF52161">
    <property type="entry name" value="Ribosomal protein L13"/>
    <property type="match status" value="1"/>
</dbReference>
<dbReference type="PROSITE" id="PS00783">
    <property type="entry name" value="RIBOSOMAL_L13"/>
    <property type="match status" value="1"/>
</dbReference>
<accession>Q21FV8</accession>
<comment type="function">
    <text evidence="1">This protein is one of the early assembly proteins of the 50S ribosomal subunit, although it is not seen to bind rRNA by itself. It is important during the early stages of 50S assembly.</text>
</comment>
<comment type="subunit">
    <text evidence="1">Part of the 50S ribosomal subunit.</text>
</comment>
<comment type="similarity">
    <text evidence="1">Belongs to the universal ribosomal protein uL13 family.</text>
</comment>
<organism>
    <name type="scientific">Saccharophagus degradans (strain 2-40 / ATCC 43961 / DSM 17024)</name>
    <dbReference type="NCBI Taxonomy" id="203122"/>
    <lineage>
        <taxon>Bacteria</taxon>
        <taxon>Pseudomonadati</taxon>
        <taxon>Pseudomonadota</taxon>
        <taxon>Gammaproteobacteria</taxon>
        <taxon>Cellvibrionales</taxon>
        <taxon>Cellvibrionaceae</taxon>
        <taxon>Saccharophagus</taxon>
    </lineage>
</organism>